<sequence>MESYIIDTYQGVPYTAAVQVDLIEKDSNPATLTVWFPLFQSSTPAPVLLDQLKTLSITTQYTASPEGPVLQVNAAAQGAAMSALPKKFAVSAAVALDEYSRLEFGTLTVCDVRSIYLTTLKPYGMVSKIMTDVRSVGRKTHDLIALCDFIDIEKGVPITIPAYIKAVSIKDSESATVEAAISGEADQAITQARIAPYAGLILIMTMNNPKGIFKKLGAGMQVIVELGPYVQAESLGKICKTWNHQRTRYVLRSR</sequence>
<dbReference type="EMBL" id="X58639">
    <property type="protein sequence ID" value="CAA41496.1"/>
    <property type="molecule type" value="mRNA"/>
</dbReference>
<dbReference type="PIR" id="A40817">
    <property type="entry name" value="MFNZT3"/>
</dbReference>
<dbReference type="SMR" id="P31620"/>
<dbReference type="GO" id="GO:0030430">
    <property type="term" value="C:host cell cytoplasm"/>
    <property type="evidence" value="ECO:0007669"/>
    <property type="project" value="UniProtKB-SubCell"/>
</dbReference>
<dbReference type="GO" id="GO:0042025">
    <property type="term" value="C:host cell nucleus"/>
    <property type="evidence" value="ECO:0007669"/>
    <property type="project" value="UniProtKB-SubCell"/>
</dbReference>
<dbReference type="GO" id="GO:0020002">
    <property type="term" value="C:host cell plasma membrane"/>
    <property type="evidence" value="ECO:0007669"/>
    <property type="project" value="UniProtKB-SubCell"/>
</dbReference>
<dbReference type="GO" id="GO:0016020">
    <property type="term" value="C:membrane"/>
    <property type="evidence" value="ECO:0007669"/>
    <property type="project" value="UniProtKB-KW"/>
</dbReference>
<dbReference type="GO" id="GO:0019031">
    <property type="term" value="C:viral envelope"/>
    <property type="evidence" value="ECO:0007669"/>
    <property type="project" value="InterPro"/>
</dbReference>
<dbReference type="GO" id="GO:0039660">
    <property type="term" value="F:structural constituent of virion"/>
    <property type="evidence" value="ECO:0007669"/>
    <property type="project" value="UniProtKB-KW"/>
</dbReference>
<dbReference type="GO" id="GO:0019068">
    <property type="term" value="P:virion assembly"/>
    <property type="evidence" value="ECO:0007669"/>
    <property type="project" value="InterPro"/>
</dbReference>
<dbReference type="Gene3D" id="2.70.20.30">
    <property type="entry name" value="HRSV-S2 matrix protein, N-terminal domain"/>
    <property type="match status" value="1"/>
</dbReference>
<dbReference type="InterPro" id="IPR055461">
    <property type="entry name" value="Matrix_Pneumo_C"/>
</dbReference>
<dbReference type="InterPro" id="IPR005056">
    <property type="entry name" value="MATRX_N_pneumovirus"/>
</dbReference>
<dbReference type="InterPro" id="IPR043062">
    <property type="entry name" value="Pneu_matrix_N"/>
</dbReference>
<dbReference type="Pfam" id="PF23766">
    <property type="entry name" value="Matrix_Pneumo_C"/>
    <property type="match status" value="1"/>
</dbReference>
<dbReference type="Pfam" id="PF03393">
    <property type="entry name" value="Matrix_Pneumo_N"/>
    <property type="match status" value="1"/>
</dbReference>
<reference key="1">
    <citation type="journal article" date="1992" name="Virology">
        <title>Cloning and sequencing of the matrix protein (M) gene of turkey rhinotracheitis virus reveal a gene order different from that of respiratory syncytial virus.</title>
        <authorList>
            <person name="Yu Q."/>
            <person name="Davis P.J."/>
            <person name="Li J."/>
            <person name="Cavanagh D."/>
        </authorList>
    </citation>
    <scope>NUCLEOTIDE SEQUENCE [MRNA]</scope>
    <source>
        <strain>UK/3B/85</strain>
    </source>
</reference>
<accession>P31620</accession>
<evidence type="ECO:0000250" key="1">
    <source>
        <dbReference type="UniProtKB" id="P0DOE7"/>
    </source>
</evidence>
<evidence type="ECO:0000305" key="2"/>
<protein>
    <recommendedName>
        <fullName>Matrix protein</fullName>
    </recommendedName>
    <alternativeName>
        <fullName evidence="1">M protein</fullName>
    </alternativeName>
</protein>
<organismHost>
    <name type="scientific">Meleagris gallopavo</name>
    <name type="common">Wild turkey</name>
    <dbReference type="NCBI Taxonomy" id="9103"/>
</organismHost>
<organism>
    <name type="scientific">Turkey rhinotracheitis virus</name>
    <name type="common">TRTV</name>
    <dbReference type="NCBI Taxonomy" id="11264"/>
    <lineage>
        <taxon>Viruses</taxon>
        <taxon>Riboviria</taxon>
        <taxon>Orthornavirae</taxon>
        <taxon>Negarnaviricota</taxon>
        <taxon>Haploviricotina</taxon>
        <taxon>Monjiviricetes</taxon>
        <taxon>Mononegavirales</taxon>
        <taxon>Pneumoviridae</taxon>
        <taxon>Metapneumovirus</taxon>
        <taxon>Metapneumovirus avis</taxon>
    </lineage>
</organism>
<name>MATRX_TRTV</name>
<comment type="function">
    <text evidence="1">Plays a crucial role in virus assembly into filaments and budding. Early in infection, localizes in the nucleus where it may inhibit host cell transcription. Later in infection, traffics to the cytoplasm to associate with inclusion bodies, the site of viral transcription and replication. During virus assembly and budding, acts as a bridge between the nucleocapsid and the lipid bilayer.</text>
</comment>
<comment type="subunit">
    <text evidence="1">Forms dimers. Forms higher-order oligomers. Interacts with glycoprotein G (via N-terminus). Interacts with protein M2-1; this interaction directs the matrix protein localization to cytoplasmic inclusions comprising viral proteins L, N, P, and M2-1 and mediates the matrix protein association with the nucleocapsid.</text>
</comment>
<comment type="subcellular location">
    <subcellularLocation>
        <location evidence="1">Virion</location>
    </subcellularLocation>
    <subcellularLocation>
        <location evidence="1">Host cytoplasm</location>
    </subcellularLocation>
    <subcellularLocation>
        <location evidence="1">Host nucleus</location>
    </subcellularLocation>
    <subcellularLocation>
        <location evidence="1">Host cell membrane</location>
        <topology evidence="1">Peripheral membrane protein</topology>
        <orientation evidence="1">Cytoplasmic side</orientation>
    </subcellularLocation>
    <text evidence="1">In the cytoplasm, associates with inclusion bodies. During bud formation, associates at the inner side of the plasma membrane of infected cells.</text>
</comment>
<comment type="similarity">
    <text evidence="2">Belongs to the pneumovirinae M protein family.</text>
</comment>
<proteinExistence type="evidence at transcript level"/>
<keyword id="KW-1032">Host cell membrane</keyword>
<keyword id="KW-1035">Host cytoplasm</keyword>
<keyword id="KW-1043">Host membrane</keyword>
<keyword id="KW-1048">Host nucleus</keyword>
<keyword id="KW-0472">Membrane</keyword>
<keyword id="KW-0468">Viral matrix protein</keyword>
<keyword id="KW-0946">Virion</keyword>
<feature type="chain" id="PRO_0000142779" description="Matrix protein">
    <location>
        <begin position="1"/>
        <end position="254"/>
    </location>
</feature>
<gene>
    <name type="primary">M</name>
</gene>